<organism>
    <name type="scientific">Streptococcus pneumoniae serotype 4 (strain ATCC BAA-334 / TIGR4)</name>
    <dbReference type="NCBI Taxonomy" id="170187"/>
    <lineage>
        <taxon>Bacteria</taxon>
        <taxon>Bacillati</taxon>
        <taxon>Bacillota</taxon>
        <taxon>Bacilli</taxon>
        <taxon>Lactobacillales</taxon>
        <taxon>Streptococcaceae</taxon>
        <taxon>Streptococcus</taxon>
    </lineage>
</organism>
<feature type="chain" id="PRO_0000192134" description="Bifunctional purine biosynthesis protein PurH">
    <location>
        <begin position="1"/>
        <end position="515"/>
    </location>
</feature>
<feature type="domain" description="MGS-like" evidence="2">
    <location>
        <begin position="1"/>
        <end position="145"/>
    </location>
</feature>
<evidence type="ECO:0000255" key="1">
    <source>
        <dbReference type="HAMAP-Rule" id="MF_00139"/>
    </source>
</evidence>
<evidence type="ECO:0000255" key="2">
    <source>
        <dbReference type="PROSITE-ProRule" id="PRU01202"/>
    </source>
</evidence>
<reference key="1">
    <citation type="journal article" date="2001" name="Science">
        <title>Complete genome sequence of a virulent isolate of Streptococcus pneumoniae.</title>
        <authorList>
            <person name="Tettelin H."/>
            <person name="Nelson K.E."/>
            <person name="Paulsen I.T."/>
            <person name="Eisen J.A."/>
            <person name="Read T.D."/>
            <person name="Peterson S.N."/>
            <person name="Heidelberg J.F."/>
            <person name="DeBoy R.T."/>
            <person name="Haft D.H."/>
            <person name="Dodson R.J."/>
            <person name="Durkin A.S."/>
            <person name="Gwinn M.L."/>
            <person name="Kolonay J.F."/>
            <person name="Nelson W.C."/>
            <person name="Peterson J.D."/>
            <person name="Umayam L.A."/>
            <person name="White O."/>
            <person name="Salzberg S.L."/>
            <person name="Lewis M.R."/>
            <person name="Radune D."/>
            <person name="Holtzapple E.K."/>
            <person name="Khouri H.M."/>
            <person name="Wolf A.M."/>
            <person name="Utterback T.R."/>
            <person name="Hansen C.L."/>
            <person name="McDonald L.A."/>
            <person name="Feldblyum T.V."/>
            <person name="Angiuoli S.V."/>
            <person name="Dickinson T."/>
            <person name="Hickey E.K."/>
            <person name="Holt I.E."/>
            <person name="Loftus B.J."/>
            <person name="Yang F."/>
            <person name="Smith H.O."/>
            <person name="Venter J.C."/>
            <person name="Dougherty B.A."/>
            <person name="Morrison D.A."/>
            <person name="Hollingshead S.K."/>
            <person name="Fraser C.M."/>
        </authorList>
    </citation>
    <scope>NUCLEOTIDE SEQUENCE [LARGE SCALE GENOMIC DNA]</scope>
    <source>
        <strain>ATCC BAA-334 / TIGR4</strain>
    </source>
</reference>
<protein>
    <recommendedName>
        <fullName evidence="1">Bifunctional purine biosynthesis protein PurH</fullName>
    </recommendedName>
    <domain>
        <recommendedName>
            <fullName evidence="1">Phosphoribosylaminoimidazolecarboxamide formyltransferase</fullName>
            <ecNumber evidence="1">2.1.2.3</ecNumber>
        </recommendedName>
        <alternativeName>
            <fullName evidence="1">AICAR transformylase</fullName>
        </alternativeName>
    </domain>
    <domain>
        <recommendedName>
            <fullName evidence="1">IMP cyclohydrolase</fullName>
            <ecNumber evidence="1">3.5.4.10</ecNumber>
        </recommendedName>
        <alternativeName>
            <fullName evidence="1">ATIC</fullName>
        </alternativeName>
        <alternativeName>
            <fullName evidence="1">IMP synthase</fullName>
        </alternativeName>
        <alternativeName>
            <fullName evidence="1">Inosinicase</fullName>
        </alternativeName>
    </domain>
</protein>
<keyword id="KW-0378">Hydrolase</keyword>
<keyword id="KW-0511">Multifunctional enzyme</keyword>
<keyword id="KW-0658">Purine biosynthesis</keyword>
<keyword id="KW-1185">Reference proteome</keyword>
<keyword id="KW-0808">Transferase</keyword>
<gene>
    <name evidence="1" type="primary">purH</name>
    <name type="ordered locus">SP_0050</name>
</gene>
<name>PUR9_STRPN</name>
<comment type="catalytic activity">
    <reaction evidence="1">
        <text>(6R)-10-formyltetrahydrofolate + 5-amino-1-(5-phospho-beta-D-ribosyl)imidazole-4-carboxamide = 5-formamido-1-(5-phospho-D-ribosyl)imidazole-4-carboxamide + (6S)-5,6,7,8-tetrahydrofolate</text>
        <dbReference type="Rhea" id="RHEA:22192"/>
        <dbReference type="ChEBI" id="CHEBI:57453"/>
        <dbReference type="ChEBI" id="CHEBI:58467"/>
        <dbReference type="ChEBI" id="CHEBI:58475"/>
        <dbReference type="ChEBI" id="CHEBI:195366"/>
        <dbReference type="EC" id="2.1.2.3"/>
    </reaction>
</comment>
<comment type="catalytic activity">
    <reaction evidence="1">
        <text>IMP + H2O = 5-formamido-1-(5-phospho-D-ribosyl)imidazole-4-carboxamide</text>
        <dbReference type="Rhea" id="RHEA:18445"/>
        <dbReference type="ChEBI" id="CHEBI:15377"/>
        <dbReference type="ChEBI" id="CHEBI:58053"/>
        <dbReference type="ChEBI" id="CHEBI:58467"/>
        <dbReference type="EC" id="3.5.4.10"/>
    </reaction>
</comment>
<comment type="pathway">
    <text evidence="1">Purine metabolism; IMP biosynthesis via de novo pathway; 5-formamido-1-(5-phospho-D-ribosyl)imidazole-4-carboxamide from 5-amino-1-(5-phospho-D-ribosyl)imidazole-4-carboxamide (10-formyl THF route): step 1/1.</text>
</comment>
<comment type="pathway">
    <text evidence="1">Purine metabolism; IMP biosynthesis via de novo pathway; IMP from 5-formamido-1-(5-phospho-D-ribosyl)imidazole-4-carboxamide: step 1/1.</text>
</comment>
<comment type="domain">
    <text evidence="1">The IMP cyclohydrolase activity resides in the N-terminal region.</text>
</comment>
<comment type="similarity">
    <text evidence="1">Belongs to the PurH family.</text>
</comment>
<sequence>MTKRVLISVSDKAGIVEFAQELKKLGWEIISTGGTKVALDNAGVDTIAIDDVTGFPEMMDGRVKTLHPNIHGGLLARRDLDSHLEAAKDNKIELIDLVVVNLYPFKETILKPDVTYADAVENIDIGGPSMLRSAAKNHASVTVVVDPADYAVVLDELAANGETSYETRQRLAAKVFRHTAAYDALIAEYFTAQVGESKPEKLTLTYDLKQPMRYGENPQQDADFYQKALPTDYSIASAKQLNGKELSFNNIRDADAAIRIIRDFKDSPTVVALKHMNPCGIGQADDIETAWDYAYESDPVSIFGGIVVLNREVDAATAEKMHGVFLEIIIAPSYTDEALAILINKKKNLRILALPFNAQEASEVEAEYTGVVGGLLVQNQDVVKESPADWQVVTKRQPTETEATALEFAWKAIKYVKSNGIIVTNDHMTLGVGPGQTNRVASVRLAIDQAKDRLDGAVLASDAFFPFADNVEEIAKAGIKAIIQPGGSVRDQESIEAADKYGLTMVFTGVRHFRH</sequence>
<proteinExistence type="inferred from homology"/>
<dbReference type="EC" id="2.1.2.3" evidence="1"/>
<dbReference type="EC" id="3.5.4.10" evidence="1"/>
<dbReference type="EMBL" id="AE005672">
    <property type="protein sequence ID" value="AAK74239.1"/>
    <property type="molecule type" value="Genomic_DNA"/>
</dbReference>
<dbReference type="PIR" id="F95005">
    <property type="entry name" value="F95005"/>
</dbReference>
<dbReference type="RefSeq" id="WP_000167081.1">
    <property type="nucleotide sequence ID" value="NZ_CP155539.1"/>
</dbReference>
<dbReference type="SMR" id="Q97T99"/>
<dbReference type="PaxDb" id="170187-SP_0050"/>
<dbReference type="EnsemblBacteria" id="AAK74239">
    <property type="protein sequence ID" value="AAK74239"/>
    <property type="gene ID" value="SP_0050"/>
</dbReference>
<dbReference type="KEGG" id="spn:SP_0050"/>
<dbReference type="eggNOG" id="COG0138">
    <property type="taxonomic scope" value="Bacteria"/>
</dbReference>
<dbReference type="PhylomeDB" id="Q97T99"/>
<dbReference type="BioCyc" id="SPNE170187:G1FZB-56-MONOMER"/>
<dbReference type="UniPathway" id="UPA00074">
    <property type="reaction ID" value="UER00133"/>
</dbReference>
<dbReference type="UniPathway" id="UPA00074">
    <property type="reaction ID" value="UER00135"/>
</dbReference>
<dbReference type="Proteomes" id="UP000000585">
    <property type="component" value="Chromosome"/>
</dbReference>
<dbReference type="GO" id="GO:0005829">
    <property type="term" value="C:cytosol"/>
    <property type="evidence" value="ECO:0007669"/>
    <property type="project" value="TreeGrafter"/>
</dbReference>
<dbReference type="GO" id="GO:0003937">
    <property type="term" value="F:IMP cyclohydrolase activity"/>
    <property type="evidence" value="ECO:0007669"/>
    <property type="project" value="UniProtKB-UniRule"/>
</dbReference>
<dbReference type="GO" id="GO:0004643">
    <property type="term" value="F:phosphoribosylaminoimidazolecarboxamide formyltransferase activity"/>
    <property type="evidence" value="ECO:0007669"/>
    <property type="project" value="UniProtKB-UniRule"/>
</dbReference>
<dbReference type="GO" id="GO:0006189">
    <property type="term" value="P:'de novo' IMP biosynthetic process"/>
    <property type="evidence" value="ECO:0007669"/>
    <property type="project" value="UniProtKB-UniRule"/>
</dbReference>
<dbReference type="CDD" id="cd01421">
    <property type="entry name" value="IMPCH"/>
    <property type="match status" value="1"/>
</dbReference>
<dbReference type="FunFam" id="3.40.140.20:FF:000001">
    <property type="entry name" value="Bifunctional purine biosynthesis protein PurH"/>
    <property type="match status" value="1"/>
</dbReference>
<dbReference type="FunFam" id="3.40.140.20:FF:000002">
    <property type="entry name" value="Bifunctional purine biosynthesis protein PurH"/>
    <property type="match status" value="1"/>
</dbReference>
<dbReference type="FunFam" id="3.40.50.1380:FF:000001">
    <property type="entry name" value="Bifunctional purine biosynthesis protein PurH"/>
    <property type="match status" value="1"/>
</dbReference>
<dbReference type="Gene3D" id="3.40.140.20">
    <property type="match status" value="2"/>
</dbReference>
<dbReference type="Gene3D" id="3.40.50.1380">
    <property type="entry name" value="Methylglyoxal synthase-like domain"/>
    <property type="match status" value="1"/>
</dbReference>
<dbReference type="HAMAP" id="MF_00139">
    <property type="entry name" value="PurH"/>
    <property type="match status" value="1"/>
</dbReference>
<dbReference type="InterPro" id="IPR024051">
    <property type="entry name" value="AICAR_Tfase_dup_dom_sf"/>
</dbReference>
<dbReference type="InterPro" id="IPR016193">
    <property type="entry name" value="Cytidine_deaminase-like"/>
</dbReference>
<dbReference type="InterPro" id="IPR011607">
    <property type="entry name" value="MGS-like_dom"/>
</dbReference>
<dbReference type="InterPro" id="IPR036914">
    <property type="entry name" value="MGS-like_dom_sf"/>
</dbReference>
<dbReference type="InterPro" id="IPR002695">
    <property type="entry name" value="PurH-like"/>
</dbReference>
<dbReference type="NCBIfam" id="NF002049">
    <property type="entry name" value="PRK00881.1"/>
    <property type="match status" value="1"/>
</dbReference>
<dbReference type="NCBIfam" id="TIGR00355">
    <property type="entry name" value="purH"/>
    <property type="match status" value="1"/>
</dbReference>
<dbReference type="PANTHER" id="PTHR11692:SF0">
    <property type="entry name" value="BIFUNCTIONAL PURINE BIOSYNTHESIS PROTEIN ATIC"/>
    <property type="match status" value="1"/>
</dbReference>
<dbReference type="PANTHER" id="PTHR11692">
    <property type="entry name" value="BIFUNCTIONAL PURINE BIOSYNTHESIS PROTEIN PURH"/>
    <property type="match status" value="1"/>
</dbReference>
<dbReference type="Pfam" id="PF01808">
    <property type="entry name" value="AICARFT_IMPCHas"/>
    <property type="match status" value="1"/>
</dbReference>
<dbReference type="Pfam" id="PF02142">
    <property type="entry name" value="MGS"/>
    <property type="match status" value="1"/>
</dbReference>
<dbReference type="PIRSF" id="PIRSF000414">
    <property type="entry name" value="AICARFT_IMPCHas"/>
    <property type="match status" value="1"/>
</dbReference>
<dbReference type="SMART" id="SM00798">
    <property type="entry name" value="AICARFT_IMPCHas"/>
    <property type="match status" value="1"/>
</dbReference>
<dbReference type="SMART" id="SM00851">
    <property type="entry name" value="MGS"/>
    <property type="match status" value="1"/>
</dbReference>
<dbReference type="SUPFAM" id="SSF53927">
    <property type="entry name" value="Cytidine deaminase-like"/>
    <property type="match status" value="1"/>
</dbReference>
<dbReference type="SUPFAM" id="SSF52335">
    <property type="entry name" value="Methylglyoxal synthase-like"/>
    <property type="match status" value="1"/>
</dbReference>
<dbReference type="PROSITE" id="PS51855">
    <property type="entry name" value="MGS"/>
    <property type="match status" value="1"/>
</dbReference>
<accession>Q97T99</accession>